<reference key="1">
    <citation type="submission" date="2005-08" db="EMBL/GenBank/DDBJ databases">
        <authorList>
            <consortium name="NIH - Mammalian Gene Collection (MGC) project"/>
        </authorList>
    </citation>
    <scope>NUCLEOTIDE SEQUENCE [LARGE SCALE MRNA]</scope>
    <source>
        <strain>Crossbred X Angus</strain>
        <tissue>Ileum</tissue>
    </source>
</reference>
<organism>
    <name type="scientific">Bos taurus</name>
    <name type="common">Bovine</name>
    <dbReference type="NCBI Taxonomy" id="9913"/>
    <lineage>
        <taxon>Eukaryota</taxon>
        <taxon>Metazoa</taxon>
        <taxon>Chordata</taxon>
        <taxon>Craniata</taxon>
        <taxon>Vertebrata</taxon>
        <taxon>Euteleostomi</taxon>
        <taxon>Mammalia</taxon>
        <taxon>Eutheria</taxon>
        <taxon>Laurasiatheria</taxon>
        <taxon>Artiodactyla</taxon>
        <taxon>Ruminantia</taxon>
        <taxon>Pecora</taxon>
        <taxon>Bovidae</taxon>
        <taxon>Bovinae</taxon>
        <taxon>Bos</taxon>
    </lineage>
</organism>
<protein>
    <recommendedName>
        <fullName>Nucleophosmin</fullName>
        <shortName>NPM</shortName>
    </recommendedName>
</protein>
<sequence length="294" mass="32703">MEDSMDMDMSPLRPQNYLFGCELKADRDYHFKVDNDENEHQLSLRTVSLGAGAKDELHVVEAEAMNYEGSPIKVTLATLKMSVQPTVSLGGFEITPPVVLRLKCGSGPVHISGQHLVAVEEDAESEEEEEEEVKLLSISGKRSAPGSGSKVPQKKVKLAADEDEDDDDDDDDDDDEDDDDDDFDEEVEEKAPVKKSVRDTPAKNAQKSNQNGKDSKPSTPRSKGQESFKKQEKTPKTPRGPSSVEDIKAKMQASIEKGGSLPKVEAKFINYVKNCFRMTDQEAIQDLWQWRKSL</sequence>
<comment type="function">
    <text evidence="2 3">Involved in diverse cellular processes such as ribosome biogenesis, centrosome duplication, protein chaperoning, histone assembly, cell proliferation, and regulation of tumor suppressors p53/TP53 and ARF. Binds ribosome presumably to drive ribosome nuclear export. Associated with nucleolar ribonucleoprotein structures and bind single-stranded nucleic acids. Acts as a chaperonin for the core histones H3, H2B and H4. Stimulates APEX1 endonuclease activity on apurinic/apyrimidinic (AP) double-stranded DNA but inhibits APEX1 endonuclease activity on AP single-stranded RNA. May exert a control of APEX1 endonuclease activity within nucleoli devoted to repair AP on rDNA and the removal of oxidized rRNA molecules. In concert with BRCA2, regulates centrosome duplication. Regulates centriole duplication: phosphorylation by PLK2 is able to trigger centriole replication. Negatively regulates the activation of EIF2AK2/PKR and suppresses apoptosis through inhibition of EIF2AK2/PKR autophosphorylation. Antagonizes the inhibitory effect of ATF5 on cell proliferation and relieves ATF5-induced G2/M blockade. In complex with MYC enhances the transcription of MYC target genes (By similarity). May act as chaperonin or cotransporter in the nucleolar localization of transcription termination factor TTF1 (By similarity).</text>
</comment>
<comment type="subunit">
    <text evidence="2 3">Decamer formed by two pentameric rings associated in a head-to-head fashion (By similarity). Disulfide-linked dimers under certain conditions (By similarity). The SWAP complex consists of NPM1, NCL, PARP1 and SWAP70 (By similarity). Interacts with NSUN2 and SENP3. Interacts with the methylated form of RPS10. Interacts (via N-terminal domain) with APEX1; the interaction is RNA-dependent and decreases in hydrogen peroxide-damaged cells. Interacts with isoform 1 of NEK2. Interacts with ROCK2 and BRCA2. Interacts with RPGR. Interacts with CENPW. Interacts with EIF2AK2/PKR. Interacts with CEBPA (isoform 4). Interacts with DDX31; this interaction prevents interaction between NPM1 and HDM2. Interacts with MYC; competitive with NOP53. Interacts with NOP53; the interaction is direct and competitive with MYC (By similarity). Interacts with LRRC34 (By similarity). Interacts with RRP1B. Interacts with NPM3. Interacts with ALKBH2 (By similarity). Interacts with TTF1 (via C-terminal region) (By similarity). Interacts with NOP2 (By similarity). Interacts with ARID3C (via REKLES DOMAIN); the interaction mediates ARID3C nuclear shuttling (By similarity).</text>
</comment>
<comment type="subcellular location">
    <subcellularLocation>
        <location evidence="2">Nucleus</location>
        <location evidence="2">Nucleolus</location>
    </subcellularLocation>
    <subcellularLocation>
        <location evidence="2">Nucleus</location>
        <location evidence="2">Nucleoplasm</location>
    </subcellularLocation>
    <subcellularLocation>
        <location evidence="2">Cytoplasm</location>
        <location evidence="2">Cytoskeleton</location>
        <location evidence="2">Microtubule organizing center</location>
        <location evidence="2">Centrosome</location>
    </subcellularLocation>
    <text evidence="2">Generally nucleolar, but is translocated to the nucleoplasm in case of serum starvation or treatment with anticancer drugs. Has been found in the cytoplasm in patients with primary acute myelogenous leukemia (AML), but not with secondary AML. Co-localizes with the methylated form of RPS10 in the granular component (GC) region of the nucleolus. Colocalized with nucleolin and APEX1 in nucleoli. Isoform 1 of NEK2 is required for its localization to the centrosome during mitosis. Can shuttle between cytoplasm and nucleus.</text>
</comment>
<comment type="PTM">
    <text evidence="2">Acetylated at C-terminal lysine residues, thereby increasing affinity to histones.</text>
</comment>
<comment type="PTM">
    <text evidence="1">ADP-ribosylated.</text>
</comment>
<comment type="PTM">
    <text evidence="2">Phosphorylated at Ser-4 by PLK1 and PLK2. Phosphorylation at Ser-4 by PLK2 in S phase is required for centriole duplication and is sufficient to trigger centriole replication. Phosphorylation at Ser-4 by PLK1 takes place during mitosis. Phosphorylated by CDK2 at Ser-125 and Thr-200. Phosphorylation at Thr-200 may trigger initiation of centrosome duplication. Phosphorylated by CDK1 at Thr-200, Thr-219, Thr-234 and Thr-237 during cell mitosis. When these four sites are phosphorated, RNA-binding activity seem to be abolished. May be phosphorylated at Ser-70 by NEK2. The Thr-200 phosphorylated form has higher affinity for ROCK2 (By similarity).</text>
</comment>
<comment type="PTM">
    <text evidence="2">Sumoylated by ARF.</text>
</comment>
<comment type="PTM">
    <text evidence="2">May be ubiquitinated. Ubiquitination leads to proteasomal degradation. Deubiquitinated by USP36 (By similarity).</text>
</comment>
<comment type="similarity">
    <text evidence="6">Belongs to the nucleoplasmin family.</text>
</comment>
<feature type="chain" id="PRO_0000253598" description="Nucleophosmin">
    <location>
        <begin position="1"/>
        <end position="294"/>
    </location>
</feature>
<feature type="region of interest" description="Required for interaction with SENP3" evidence="1">
    <location>
        <begin position="1"/>
        <end position="187"/>
    </location>
</feature>
<feature type="region of interest" description="Necessary for interaction with APEX1" evidence="1">
    <location>
        <begin position="1"/>
        <end position="117"/>
    </location>
</feature>
<feature type="region of interest" description="Disordered" evidence="5">
    <location>
        <begin position="121"/>
        <end position="249"/>
    </location>
</feature>
<feature type="region of interest" description="Interaction with NOP2" evidence="2">
    <location>
        <begin position="188"/>
        <end position="216"/>
    </location>
</feature>
<feature type="region of interest" description="Required for nucleolar localization" evidence="1">
    <location>
        <begin position="243"/>
        <end position="294"/>
    </location>
</feature>
<feature type="short sequence motif" description="Nuclear localization signal" evidence="4">
    <location>
        <begin position="152"/>
        <end position="157"/>
    </location>
</feature>
<feature type="short sequence motif" description="Nuclear localization signal" evidence="4">
    <location>
        <begin position="192"/>
        <end position="198"/>
    </location>
</feature>
<feature type="compositionally biased region" description="Acidic residues" evidence="5">
    <location>
        <begin position="121"/>
        <end position="132"/>
    </location>
</feature>
<feature type="compositionally biased region" description="Acidic residues" evidence="5">
    <location>
        <begin position="161"/>
        <end position="188"/>
    </location>
</feature>
<feature type="compositionally biased region" description="Basic and acidic residues" evidence="5">
    <location>
        <begin position="189"/>
        <end position="201"/>
    </location>
</feature>
<feature type="compositionally biased region" description="Polar residues" evidence="5">
    <location>
        <begin position="203"/>
        <end position="222"/>
    </location>
</feature>
<feature type="compositionally biased region" description="Basic and acidic residues" evidence="5">
    <location>
        <begin position="223"/>
        <end position="235"/>
    </location>
</feature>
<feature type="site" description="Interaction between pentamers" evidence="1">
    <location>
        <position position="55"/>
    </location>
</feature>
<feature type="site" description="Interaction between pentamers" evidence="1">
    <location>
        <position position="80"/>
    </location>
</feature>
<feature type="modified residue" description="N-acetylmethionine" evidence="2">
    <location>
        <position position="1"/>
    </location>
</feature>
<feature type="modified residue" description="Phosphoserine; by PLK1 and PLK2" evidence="2">
    <location>
        <position position="4"/>
    </location>
</feature>
<feature type="modified residue" description="Phosphoserine" evidence="2">
    <location>
        <position position="10"/>
    </location>
</feature>
<feature type="modified residue" description="N6-acetyllysine; alternate" evidence="2">
    <location>
        <position position="32"/>
    </location>
</feature>
<feature type="modified residue" description="Phosphoserine" evidence="2">
    <location>
        <position position="43"/>
    </location>
</feature>
<feature type="modified residue" description="Phosphotyrosine" evidence="3">
    <location>
        <position position="67"/>
    </location>
</feature>
<feature type="modified residue" description="Phosphoserine" evidence="2">
    <location>
        <position position="70"/>
    </location>
</feature>
<feature type="modified residue" description="Phosphothreonine" evidence="2">
    <location>
        <position position="75"/>
    </location>
</feature>
<feature type="modified residue" description="Phosphothreonine" evidence="2">
    <location>
        <position position="95"/>
    </location>
</feature>
<feature type="modified residue" description="Phosphoserine; by CDK2" evidence="2">
    <location>
        <position position="125"/>
    </location>
</feature>
<feature type="modified residue" description="Phosphoserine" evidence="2">
    <location>
        <position position="137"/>
    </location>
</feature>
<feature type="modified residue" description="Phosphoserine" evidence="2">
    <location>
        <position position="139"/>
    </location>
</feature>
<feature type="modified residue" description="N6-acetyllysine; alternate" evidence="2">
    <location>
        <position position="150"/>
    </location>
</feature>
<feature type="modified residue" description="N6-acetyllysine" evidence="2">
    <location>
        <position position="154"/>
    </location>
</feature>
<feature type="modified residue" description="Phosphothreonine; by CDK1 and CDK2" evidence="2">
    <location>
        <position position="200"/>
    </location>
</feature>
<feature type="modified residue" description="ADP-ribosylserine" evidence="2">
    <location>
        <position position="208"/>
    </location>
</feature>
<feature type="modified residue" description="N6-acetyllysine" evidence="2">
    <location>
        <position position="213"/>
    </location>
</feature>
<feature type="modified residue" description="Phosphothreonine; by CDK1" evidence="1">
    <location>
        <position position="219"/>
    </location>
</feature>
<feature type="modified residue" description="Phosphoserine" evidence="2">
    <location>
        <position position="227"/>
    </location>
</feature>
<feature type="modified residue" description="N6-acetyllysine" evidence="2">
    <location>
        <position position="229"/>
    </location>
</feature>
<feature type="modified residue" description="N6-acetyllysine; alternate" evidence="2">
    <location>
        <position position="230"/>
    </location>
</feature>
<feature type="modified residue" description="Phosphothreonine" evidence="2">
    <location>
        <position position="234"/>
    </location>
</feature>
<feature type="modified residue" description="Phosphothreonine" evidence="2">
    <location>
        <position position="237"/>
    </location>
</feature>
<feature type="modified residue" description="Phosphoserine" evidence="2">
    <location>
        <position position="242"/>
    </location>
</feature>
<feature type="modified residue" description="Phosphoserine" evidence="2">
    <location>
        <position position="243"/>
    </location>
</feature>
<feature type="modified residue" description="N6-acetyllysine; alternate" evidence="2">
    <location>
        <position position="250"/>
    </location>
</feature>
<feature type="modified residue" description="Phosphoserine" evidence="2">
    <location>
        <position position="254"/>
    </location>
</feature>
<feature type="modified residue" description="N6-acetyllysine; alternate" evidence="2">
    <location>
        <position position="257"/>
    </location>
</feature>
<feature type="modified residue" description="Phosphoserine" evidence="2">
    <location>
        <position position="260"/>
    </location>
</feature>
<feature type="modified residue" description="N6-acetyllysine; alternate" evidence="2">
    <location>
        <position position="267"/>
    </location>
</feature>
<feature type="modified residue" description="N6-succinyllysine; alternate" evidence="3">
    <location>
        <position position="267"/>
    </location>
</feature>
<feature type="modified residue" description="N6-acetyllysine; alternate" evidence="2">
    <location>
        <position position="273"/>
    </location>
</feature>
<feature type="modified residue" description="Phosphothreonine" evidence="2">
    <location>
        <position position="279"/>
    </location>
</feature>
<feature type="modified residue" description="N6-acetyllysine" evidence="2">
    <location>
        <position position="292"/>
    </location>
</feature>
<feature type="cross-link" description="Glycyl lysine isopeptide (Lys-Gly) (interchain with G-Cter in SUMO1); alternate" evidence="2">
    <location>
        <position position="32"/>
    </location>
</feature>
<feature type="cross-link" description="Glycyl lysine isopeptide (Lys-Gly) (interchain with G-Cter in SUMO2); alternate" evidence="2">
    <location>
        <position position="32"/>
    </location>
</feature>
<feature type="cross-link" description="Glycyl lysine isopeptide (Lys-Gly) (interchain with G-Cter in SUMO2)" evidence="2">
    <location>
        <position position="141"/>
    </location>
</feature>
<feature type="cross-link" description="Glycyl lysine isopeptide (Lys-Gly) (interchain with G-Cter in SUMO2); alternate" evidence="2">
    <location>
        <position position="150"/>
    </location>
</feature>
<feature type="cross-link" description="Glycyl lysine isopeptide (Lys-Gly) (interchain with G-Cter in SUMO2)" evidence="2">
    <location>
        <position position="216"/>
    </location>
</feature>
<feature type="cross-link" description="Glycyl lysine isopeptide (Lys-Gly) (interchain with G-Cter in SUMO); alternate" evidence="1">
    <location>
        <position position="230"/>
    </location>
</feature>
<feature type="cross-link" description="Glycyl lysine isopeptide (Lys-Gly) (interchain with G-Cter in SUMO1); alternate" evidence="2">
    <location>
        <position position="248"/>
    </location>
</feature>
<feature type="cross-link" description="Glycyl lysine isopeptide (Lys-Gly) (interchain with G-Cter in SUMO2); alternate" evidence="2">
    <location>
        <position position="248"/>
    </location>
</feature>
<feature type="cross-link" description="Glycyl lysine isopeptide (Lys-Gly) (interchain with G-Cter in SUMO2); alternate" evidence="2">
    <location>
        <position position="250"/>
    </location>
</feature>
<feature type="cross-link" description="Glycyl lysine isopeptide (Lys-Gly) (interchain with G-Cter in SUMO1); alternate" evidence="2">
    <location>
        <position position="257"/>
    </location>
</feature>
<feature type="cross-link" description="Glycyl lysine isopeptide (Lys-Gly) (interchain with G-Cter in SUMO2); alternate" evidence="2">
    <location>
        <position position="257"/>
    </location>
</feature>
<feature type="cross-link" description="Glycyl lysine isopeptide (Lys-Gly) (interchain with G-Cter in SUMO); alternate" evidence="1">
    <location>
        <position position="263"/>
    </location>
</feature>
<feature type="cross-link" description="Glycyl lysine isopeptide (Lys-Gly) (interchain with G-Cter in SUMO2); alternate" evidence="2">
    <location>
        <position position="263"/>
    </location>
</feature>
<feature type="cross-link" description="Glycyl lysine isopeptide (Lys-Gly) (interchain with G-Cter in SUMO1); alternate" evidence="2">
    <location>
        <position position="267"/>
    </location>
</feature>
<feature type="cross-link" description="Glycyl lysine isopeptide (Lys-Gly) (interchain with G-Cter in SUMO2); alternate" evidence="2">
    <location>
        <position position="267"/>
    </location>
</feature>
<feature type="cross-link" description="Glycyl lysine isopeptide (Lys-Gly) (interchain with G-Cter in SUMO2); alternate" evidence="2">
    <location>
        <position position="273"/>
    </location>
</feature>
<name>NPM_BOVIN</name>
<proteinExistence type="evidence at transcript level"/>
<gene>
    <name type="primary">NPM1</name>
</gene>
<dbReference type="EMBL" id="BC102099">
    <property type="protein sequence ID" value="AAI02100.1"/>
    <property type="molecule type" value="mRNA"/>
</dbReference>
<dbReference type="RefSeq" id="NP_001030518.1">
    <property type="nucleotide sequence ID" value="NM_001035441.2"/>
</dbReference>
<dbReference type="BMRB" id="Q3T160"/>
<dbReference type="SMR" id="Q3T160"/>
<dbReference type="FunCoup" id="Q3T160">
    <property type="interactions" value="8"/>
</dbReference>
<dbReference type="STRING" id="9913.ENSBTAP00000047554"/>
<dbReference type="PaxDb" id="9913-ENSBTAP00000020363"/>
<dbReference type="PeptideAtlas" id="Q3T160"/>
<dbReference type="GeneID" id="614028"/>
<dbReference type="KEGG" id="bta:614028"/>
<dbReference type="CTD" id="4869"/>
<dbReference type="eggNOG" id="KOG0488">
    <property type="taxonomic scope" value="Eukaryota"/>
</dbReference>
<dbReference type="InParanoid" id="Q3T160"/>
<dbReference type="OrthoDB" id="9946910at2759"/>
<dbReference type="Proteomes" id="UP000009136">
    <property type="component" value="Unplaced"/>
</dbReference>
<dbReference type="GO" id="GO:0005813">
    <property type="term" value="C:centrosome"/>
    <property type="evidence" value="ECO:0000318"/>
    <property type="project" value="GO_Central"/>
</dbReference>
<dbReference type="GO" id="GO:0005737">
    <property type="term" value="C:cytoplasm"/>
    <property type="evidence" value="ECO:0000318"/>
    <property type="project" value="GO_Central"/>
</dbReference>
<dbReference type="GO" id="GO:0005730">
    <property type="term" value="C:nucleolus"/>
    <property type="evidence" value="ECO:0000250"/>
    <property type="project" value="UniProtKB"/>
</dbReference>
<dbReference type="GO" id="GO:0005654">
    <property type="term" value="C:nucleoplasm"/>
    <property type="evidence" value="ECO:0000318"/>
    <property type="project" value="GO_Central"/>
</dbReference>
<dbReference type="GO" id="GO:1990904">
    <property type="term" value="C:ribonucleoprotein complex"/>
    <property type="evidence" value="ECO:0000318"/>
    <property type="project" value="GO_Central"/>
</dbReference>
<dbReference type="GO" id="GO:0003682">
    <property type="term" value="F:chromatin binding"/>
    <property type="evidence" value="ECO:0000318"/>
    <property type="project" value="GO_Central"/>
</dbReference>
<dbReference type="GO" id="GO:0042393">
    <property type="term" value="F:histone binding"/>
    <property type="evidence" value="ECO:0000318"/>
    <property type="project" value="GO_Central"/>
</dbReference>
<dbReference type="GO" id="GO:0004860">
    <property type="term" value="F:protein kinase inhibitor activity"/>
    <property type="evidence" value="ECO:0000250"/>
    <property type="project" value="UniProtKB"/>
</dbReference>
<dbReference type="GO" id="GO:0003723">
    <property type="term" value="F:RNA binding"/>
    <property type="evidence" value="ECO:0000318"/>
    <property type="project" value="GO_Central"/>
</dbReference>
<dbReference type="GO" id="GO:0006338">
    <property type="term" value="P:chromatin remodeling"/>
    <property type="evidence" value="ECO:0000318"/>
    <property type="project" value="GO_Central"/>
</dbReference>
<dbReference type="GO" id="GO:0006281">
    <property type="term" value="P:DNA repair"/>
    <property type="evidence" value="ECO:0000250"/>
    <property type="project" value="UniProtKB"/>
</dbReference>
<dbReference type="GO" id="GO:0043066">
    <property type="term" value="P:negative regulation of apoptotic process"/>
    <property type="evidence" value="ECO:0000250"/>
    <property type="project" value="UniProtKB"/>
</dbReference>
<dbReference type="GO" id="GO:0044387">
    <property type="term" value="P:negative regulation of protein kinase activity by regulation of protein phosphorylation"/>
    <property type="evidence" value="ECO:0000250"/>
    <property type="project" value="UniProtKB"/>
</dbReference>
<dbReference type="GO" id="GO:1902751">
    <property type="term" value="P:positive regulation of cell cycle G2/M phase transition"/>
    <property type="evidence" value="ECO:0000250"/>
    <property type="project" value="UniProtKB"/>
</dbReference>
<dbReference type="GO" id="GO:0008284">
    <property type="term" value="P:positive regulation of cell population proliferation"/>
    <property type="evidence" value="ECO:0000250"/>
    <property type="project" value="UniProtKB"/>
</dbReference>
<dbReference type="GO" id="GO:0045893">
    <property type="term" value="P:positive regulation of DNA-templated transcription"/>
    <property type="evidence" value="ECO:0000250"/>
    <property type="project" value="UniProtKB"/>
</dbReference>
<dbReference type="GO" id="GO:0045944">
    <property type="term" value="P:positive regulation of transcription by RNA polymerase II"/>
    <property type="evidence" value="ECO:0000250"/>
    <property type="project" value="UniProtKB"/>
</dbReference>
<dbReference type="GO" id="GO:0045727">
    <property type="term" value="P:positive regulation of translation"/>
    <property type="evidence" value="ECO:0000250"/>
    <property type="project" value="UniProtKB"/>
</dbReference>
<dbReference type="GO" id="GO:0046599">
    <property type="term" value="P:regulation of centriole replication"/>
    <property type="evidence" value="ECO:0000250"/>
    <property type="project" value="UniProtKB"/>
</dbReference>
<dbReference type="GO" id="GO:0010824">
    <property type="term" value="P:regulation of centrosome duplication"/>
    <property type="evidence" value="ECO:0000318"/>
    <property type="project" value="GO_Central"/>
</dbReference>
<dbReference type="GO" id="GO:0060735">
    <property type="term" value="P:regulation of eIF2 alpha phosphorylation by dsRNA"/>
    <property type="evidence" value="ECO:0000250"/>
    <property type="project" value="UniProtKB"/>
</dbReference>
<dbReference type="GO" id="GO:0032071">
    <property type="term" value="P:regulation of endodeoxyribonuclease activity"/>
    <property type="evidence" value="ECO:0000250"/>
    <property type="project" value="UniProtKB"/>
</dbReference>
<dbReference type="GO" id="GO:0060699">
    <property type="term" value="P:regulation of endoribonuclease activity"/>
    <property type="evidence" value="ECO:0000250"/>
    <property type="project" value="UniProtKB"/>
</dbReference>
<dbReference type="GO" id="GO:0042273">
    <property type="term" value="P:ribosomal large subunit biogenesis"/>
    <property type="evidence" value="ECO:0000318"/>
    <property type="project" value="GO_Central"/>
</dbReference>
<dbReference type="GO" id="GO:0000055">
    <property type="term" value="P:ribosomal large subunit export from nucleus"/>
    <property type="evidence" value="ECO:0000318"/>
    <property type="project" value="GO_Central"/>
</dbReference>
<dbReference type="GO" id="GO:0042274">
    <property type="term" value="P:ribosomal small subunit biogenesis"/>
    <property type="evidence" value="ECO:0000318"/>
    <property type="project" value="GO_Central"/>
</dbReference>
<dbReference type="GO" id="GO:0000056">
    <property type="term" value="P:ribosomal small subunit export from nucleus"/>
    <property type="evidence" value="ECO:0000318"/>
    <property type="project" value="GO_Central"/>
</dbReference>
<dbReference type="FunFam" id="1.10.10.2100:FF:000001">
    <property type="entry name" value="Nucleophosmin 1"/>
    <property type="match status" value="1"/>
</dbReference>
<dbReference type="FunFam" id="2.60.120.340:FF:000001">
    <property type="entry name" value="Nucleophosmin 1"/>
    <property type="match status" value="1"/>
</dbReference>
<dbReference type="Gene3D" id="1.10.10.2100">
    <property type="match status" value="1"/>
</dbReference>
<dbReference type="Gene3D" id="2.60.120.340">
    <property type="entry name" value="Nucleoplasmin core domain"/>
    <property type="match status" value="1"/>
</dbReference>
<dbReference type="InterPro" id="IPR032569">
    <property type="entry name" value="NPM1_C"/>
</dbReference>
<dbReference type="InterPro" id="IPR004301">
    <property type="entry name" value="Nucleoplasmin"/>
</dbReference>
<dbReference type="InterPro" id="IPR024057">
    <property type="entry name" value="Nucleoplasmin_core_dom"/>
</dbReference>
<dbReference type="InterPro" id="IPR036824">
    <property type="entry name" value="Nucleoplasmin_core_dom_sf"/>
</dbReference>
<dbReference type="PANTHER" id="PTHR22747:SF28">
    <property type="entry name" value="NUCLEOPHOSMIN"/>
    <property type="match status" value="1"/>
</dbReference>
<dbReference type="PANTHER" id="PTHR22747">
    <property type="entry name" value="NUCLEOPLASMIN"/>
    <property type="match status" value="1"/>
</dbReference>
<dbReference type="Pfam" id="PF16276">
    <property type="entry name" value="NPM1-C"/>
    <property type="match status" value="1"/>
</dbReference>
<dbReference type="Pfam" id="PF03066">
    <property type="entry name" value="Nucleoplasmin"/>
    <property type="match status" value="1"/>
</dbReference>
<dbReference type="SUPFAM" id="SSF69203">
    <property type="entry name" value="Nucleoplasmin-like core domain"/>
    <property type="match status" value="1"/>
</dbReference>
<evidence type="ECO:0000250" key="1"/>
<evidence type="ECO:0000250" key="2">
    <source>
        <dbReference type="UniProtKB" id="P06748"/>
    </source>
</evidence>
<evidence type="ECO:0000250" key="3">
    <source>
        <dbReference type="UniProtKB" id="Q61937"/>
    </source>
</evidence>
<evidence type="ECO:0000255" key="4"/>
<evidence type="ECO:0000256" key="5">
    <source>
        <dbReference type="SAM" id="MobiDB-lite"/>
    </source>
</evidence>
<evidence type="ECO:0000305" key="6"/>
<accession>Q3T160</accession>
<keyword id="KW-0007">Acetylation</keyword>
<keyword id="KW-0013">ADP-ribosylation</keyword>
<keyword id="KW-0143">Chaperone</keyword>
<keyword id="KW-0963">Cytoplasm</keyword>
<keyword id="KW-0206">Cytoskeleton</keyword>
<keyword id="KW-1015">Disulfide bond</keyword>
<keyword id="KW-1017">Isopeptide bond</keyword>
<keyword id="KW-0539">Nucleus</keyword>
<keyword id="KW-0597">Phosphoprotein</keyword>
<keyword id="KW-1185">Reference proteome</keyword>
<keyword id="KW-0694">RNA-binding</keyword>
<keyword id="KW-0832">Ubl conjugation</keyword>